<organism>
    <name type="scientific">Nitrosospira multiformis (strain ATCC 25196 / NCIMB 11849 / C 71)</name>
    <dbReference type="NCBI Taxonomy" id="323848"/>
    <lineage>
        <taxon>Bacteria</taxon>
        <taxon>Pseudomonadati</taxon>
        <taxon>Pseudomonadota</taxon>
        <taxon>Betaproteobacteria</taxon>
        <taxon>Nitrosomonadales</taxon>
        <taxon>Nitrosomonadaceae</taxon>
        <taxon>Nitrosospira</taxon>
    </lineage>
</organism>
<evidence type="ECO:0000255" key="1">
    <source>
        <dbReference type="HAMAP-Rule" id="MF_01382"/>
    </source>
</evidence>
<protein>
    <recommendedName>
        <fullName evidence="1">Protein translocase subunit SecA 2</fullName>
        <ecNumber evidence="1">7.4.2.8</ecNumber>
    </recommendedName>
</protein>
<keyword id="KW-0067">ATP-binding</keyword>
<keyword id="KW-0997">Cell inner membrane</keyword>
<keyword id="KW-1003">Cell membrane</keyword>
<keyword id="KW-0963">Cytoplasm</keyword>
<keyword id="KW-0472">Membrane</keyword>
<keyword id="KW-0547">Nucleotide-binding</keyword>
<keyword id="KW-0653">Protein transport</keyword>
<keyword id="KW-1185">Reference proteome</keyword>
<keyword id="KW-1278">Translocase</keyword>
<keyword id="KW-0811">Translocation</keyword>
<keyword id="KW-0813">Transport</keyword>
<proteinExistence type="inferred from homology"/>
<comment type="function">
    <text evidence="1">Part of the Sec protein translocase complex. Interacts with the SecYEG preprotein conducting channel. Has a central role in coupling the hydrolysis of ATP to the transfer of proteins into and across the cell membrane, serving both as a receptor for the preprotein-SecB complex and as an ATP-driven molecular motor driving the stepwise translocation of polypeptide chains across the membrane.</text>
</comment>
<comment type="catalytic activity">
    <reaction evidence="1">
        <text>ATP + H2O + cellular proteinSide 1 = ADP + phosphate + cellular proteinSide 2.</text>
        <dbReference type="EC" id="7.4.2.8"/>
    </reaction>
</comment>
<comment type="subunit">
    <text evidence="1">Monomer and homodimer. Part of the essential Sec protein translocation apparatus which comprises SecA, SecYEG and auxiliary proteins SecDF-YajC and YidC.</text>
</comment>
<comment type="subcellular location">
    <subcellularLocation>
        <location evidence="1">Cell inner membrane</location>
        <topology evidence="1">Peripheral membrane protein</topology>
        <orientation evidence="1">Cytoplasmic side</orientation>
    </subcellularLocation>
    <subcellularLocation>
        <location evidence="1">Cytoplasm</location>
    </subcellularLocation>
    <text evidence="1">Distribution is 50-50.</text>
</comment>
<comment type="similarity">
    <text evidence="1">Belongs to the SecA family.</text>
</comment>
<name>SECA2_NITMU</name>
<sequence length="666" mass="74707">MSKALLAAWRINSLAPAPYPERLDTNDNALDRFLGSSLGQARLWASHLRLKRLRSFADKVVHRSNALSALSEAELAACVDDLRVKLARQGLTEDLTIEVFSLVREVCGRKLGLRHFPVQLIGGRVILAGKLAEMQTGEGKSLTAVLPAIAVALSGLPVHVITVNEYLVRRDARFMRPVYEFFGLDVGMVVPDQDPETRRNAYGCDVTYCVNKDLVFDYLRDRIDSNRDVSDARRAVARLFRGDENSRAYLRGLFFGIVDEADSVLIDEARTPLIISSSVSDKQGVDDYRRALDFCRQLRDGLHFRIFAADKLIQLTPAGRDHITNICGNLPGVWQVARARFELIEQALAAQLLYMRDKHYIVKDEKVQIVDEYTGRVMSDRTWESGLHQMIEVKEGCALTDRRKTISRITYQRFFRRYLRLGGMTGTAAEVVGELSAIFGLDVLRIPTNRAVQRKNLGTRIFLDTASRWDAVLKSIRRVRDEGRPVLIGTRSVAASEHLSSLLKTEGIEHSVINARQDEDEATVVEQAGRVGRVTVATNMAGRGTDIKLESGVSDRGGLHVILSEFHESPRIDRQLYGRAGRQGDKGSYESIVSLEDELFVLFSGEMARRVMSNSSFSNVITGMKAKLLRGSAQRSSERYYSRIRRQTVLEDQRLAKMLAFAGRGE</sequence>
<reference key="1">
    <citation type="submission" date="2005-08" db="EMBL/GenBank/DDBJ databases">
        <title>Complete sequence of chromosome 1 of Nitrosospira multiformis ATCC 25196.</title>
        <authorList>
            <person name="Copeland A."/>
            <person name="Lucas S."/>
            <person name="Lapidus A."/>
            <person name="Barry K."/>
            <person name="Detter J.C."/>
            <person name="Glavina T."/>
            <person name="Hammon N."/>
            <person name="Israni S."/>
            <person name="Pitluck S."/>
            <person name="Chain P."/>
            <person name="Malfatti S."/>
            <person name="Shin M."/>
            <person name="Vergez L."/>
            <person name="Schmutz J."/>
            <person name="Larimer F."/>
            <person name="Land M."/>
            <person name="Hauser L."/>
            <person name="Kyrpides N."/>
            <person name="Lykidis A."/>
            <person name="Richardson P."/>
        </authorList>
    </citation>
    <scope>NUCLEOTIDE SEQUENCE [LARGE SCALE GENOMIC DNA]</scope>
    <source>
        <strain>ATCC 25196 / NCIMB 11849 / C 71</strain>
    </source>
</reference>
<feature type="chain" id="PRO_0000318397" description="Protein translocase subunit SecA 2">
    <location>
        <begin position="1"/>
        <end position="666"/>
    </location>
</feature>
<feature type="binding site" evidence="1">
    <location>
        <position position="119"/>
    </location>
    <ligand>
        <name>ATP</name>
        <dbReference type="ChEBI" id="CHEBI:30616"/>
    </ligand>
</feature>
<feature type="binding site" evidence="1">
    <location>
        <begin position="137"/>
        <end position="141"/>
    </location>
    <ligand>
        <name>ATP</name>
        <dbReference type="ChEBI" id="CHEBI:30616"/>
    </ligand>
</feature>
<feature type="binding site" evidence="1">
    <location>
        <position position="546"/>
    </location>
    <ligand>
        <name>ATP</name>
        <dbReference type="ChEBI" id="CHEBI:30616"/>
    </ligand>
</feature>
<dbReference type="EC" id="7.4.2.8" evidence="1"/>
<dbReference type="EMBL" id="CP000103">
    <property type="protein sequence ID" value="ABB74227.1"/>
    <property type="molecule type" value="Genomic_DNA"/>
</dbReference>
<dbReference type="RefSeq" id="WP_011380272.1">
    <property type="nucleotide sequence ID" value="NZ_FNVK01000002.1"/>
</dbReference>
<dbReference type="SMR" id="Q2YAJ4"/>
<dbReference type="STRING" id="323848.Nmul_A0924"/>
<dbReference type="KEGG" id="nmu:Nmul_A0924"/>
<dbReference type="eggNOG" id="COG0653">
    <property type="taxonomic scope" value="Bacteria"/>
</dbReference>
<dbReference type="HOGENOM" id="CLU_005314_3_2_4"/>
<dbReference type="Proteomes" id="UP000002718">
    <property type="component" value="Chromosome"/>
</dbReference>
<dbReference type="GO" id="GO:0031522">
    <property type="term" value="C:cell envelope Sec protein transport complex"/>
    <property type="evidence" value="ECO:0007669"/>
    <property type="project" value="TreeGrafter"/>
</dbReference>
<dbReference type="GO" id="GO:0005829">
    <property type="term" value="C:cytosol"/>
    <property type="evidence" value="ECO:0007669"/>
    <property type="project" value="TreeGrafter"/>
</dbReference>
<dbReference type="GO" id="GO:0005886">
    <property type="term" value="C:plasma membrane"/>
    <property type="evidence" value="ECO:0007669"/>
    <property type="project" value="UniProtKB-SubCell"/>
</dbReference>
<dbReference type="GO" id="GO:0005524">
    <property type="term" value="F:ATP binding"/>
    <property type="evidence" value="ECO:0007669"/>
    <property type="project" value="UniProtKB-UniRule"/>
</dbReference>
<dbReference type="GO" id="GO:0008564">
    <property type="term" value="F:protein-exporting ATPase activity"/>
    <property type="evidence" value="ECO:0007669"/>
    <property type="project" value="UniProtKB-EC"/>
</dbReference>
<dbReference type="GO" id="GO:0065002">
    <property type="term" value="P:intracellular protein transmembrane transport"/>
    <property type="evidence" value="ECO:0007669"/>
    <property type="project" value="UniProtKB-UniRule"/>
</dbReference>
<dbReference type="GO" id="GO:0017038">
    <property type="term" value="P:protein import"/>
    <property type="evidence" value="ECO:0007669"/>
    <property type="project" value="InterPro"/>
</dbReference>
<dbReference type="GO" id="GO:0006605">
    <property type="term" value="P:protein targeting"/>
    <property type="evidence" value="ECO:0007669"/>
    <property type="project" value="UniProtKB-UniRule"/>
</dbReference>
<dbReference type="GO" id="GO:0043952">
    <property type="term" value="P:protein transport by the Sec complex"/>
    <property type="evidence" value="ECO:0007669"/>
    <property type="project" value="TreeGrafter"/>
</dbReference>
<dbReference type="CDD" id="cd17928">
    <property type="entry name" value="DEXDc_SecA"/>
    <property type="match status" value="1"/>
</dbReference>
<dbReference type="CDD" id="cd18803">
    <property type="entry name" value="SF2_C_secA"/>
    <property type="match status" value="1"/>
</dbReference>
<dbReference type="FunFam" id="3.40.50.300:FF:000429">
    <property type="entry name" value="Preprotein translocase subunit SecA"/>
    <property type="match status" value="1"/>
</dbReference>
<dbReference type="Gene3D" id="3.40.50.300">
    <property type="entry name" value="P-loop containing nucleotide triphosphate hydrolases"/>
    <property type="match status" value="2"/>
</dbReference>
<dbReference type="Gene3D" id="3.90.1440.10">
    <property type="entry name" value="SecA, preprotein cross-linking domain"/>
    <property type="match status" value="1"/>
</dbReference>
<dbReference type="HAMAP" id="MF_01382">
    <property type="entry name" value="SecA"/>
    <property type="match status" value="1"/>
</dbReference>
<dbReference type="InterPro" id="IPR014001">
    <property type="entry name" value="Helicase_ATP-bd"/>
</dbReference>
<dbReference type="InterPro" id="IPR001650">
    <property type="entry name" value="Helicase_C-like"/>
</dbReference>
<dbReference type="InterPro" id="IPR027417">
    <property type="entry name" value="P-loop_NTPase"/>
</dbReference>
<dbReference type="InterPro" id="IPR000185">
    <property type="entry name" value="SecA"/>
</dbReference>
<dbReference type="InterPro" id="IPR020937">
    <property type="entry name" value="SecA_CS"/>
</dbReference>
<dbReference type="InterPro" id="IPR011115">
    <property type="entry name" value="SecA_DEAD"/>
</dbReference>
<dbReference type="InterPro" id="IPR014018">
    <property type="entry name" value="SecA_motor_DEAD"/>
</dbReference>
<dbReference type="InterPro" id="IPR011130">
    <property type="entry name" value="SecA_preprotein_X-link_dom"/>
</dbReference>
<dbReference type="InterPro" id="IPR044722">
    <property type="entry name" value="SecA_SF2_C"/>
</dbReference>
<dbReference type="InterPro" id="IPR036670">
    <property type="entry name" value="SecA_X-link_sf"/>
</dbReference>
<dbReference type="PANTHER" id="PTHR30612:SF0">
    <property type="entry name" value="CHLOROPLAST PROTEIN-TRANSPORTING ATPASE"/>
    <property type="match status" value="1"/>
</dbReference>
<dbReference type="PANTHER" id="PTHR30612">
    <property type="entry name" value="SECA INNER MEMBRANE COMPONENT OF SEC PROTEIN SECRETION SYSTEM"/>
    <property type="match status" value="1"/>
</dbReference>
<dbReference type="Pfam" id="PF21090">
    <property type="entry name" value="P-loop_SecA"/>
    <property type="match status" value="2"/>
</dbReference>
<dbReference type="Pfam" id="PF07517">
    <property type="entry name" value="SecA_DEAD"/>
    <property type="match status" value="1"/>
</dbReference>
<dbReference type="Pfam" id="PF01043">
    <property type="entry name" value="SecA_PP_bind"/>
    <property type="match status" value="1"/>
</dbReference>
<dbReference type="PRINTS" id="PR00906">
    <property type="entry name" value="SECA"/>
</dbReference>
<dbReference type="SMART" id="SM00957">
    <property type="entry name" value="SecA_DEAD"/>
    <property type="match status" value="1"/>
</dbReference>
<dbReference type="SMART" id="SM00958">
    <property type="entry name" value="SecA_PP_bind"/>
    <property type="match status" value="1"/>
</dbReference>
<dbReference type="SUPFAM" id="SSF52540">
    <property type="entry name" value="P-loop containing nucleoside triphosphate hydrolases"/>
    <property type="match status" value="2"/>
</dbReference>
<dbReference type="SUPFAM" id="SSF81767">
    <property type="entry name" value="Pre-protein crosslinking domain of SecA"/>
    <property type="match status" value="1"/>
</dbReference>
<dbReference type="PROSITE" id="PS01312">
    <property type="entry name" value="SECA"/>
    <property type="match status" value="1"/>
</dbReference>
<dbReference type="PROSITE" id="PS51196">
    <property type="entry name" value="SECA_MOTOR_DEAD"/>
    <property type="match status" value="1"/>
</dbReference>
<accession>Q2YAJ4</accession>
<gene>
    <name evidence="1" type="primary">secA2</name>
    <name type="ordered locus">Nmul_A0924</name>
</gene>